<name>CYOE2_VIBC1</name>
<gene>
    <name evidence="1" type="primary">cyoE2</name>
    <name type="ordered locus">VIBHAR_06264</name>
</gene>
<keyword id="KW-0997">Cell inner membrane</keyword>
<keyword id="KW-1003">Cell membrane</keyword>
<keyword id="KW-0350">Heme biosynthesis</keyword>
<keyword id="KW-0472">Membrane</keyword>
<keyword id="KW-0808">Transferase</keyword>
<keyword id="KW-0812">Transmembrane</keyword>
<keyword id="KW-1133">Transmembrane helix</keyword>
<protein>
    <recommendedName>
        <fullName evidence="1">Protoheme IX farnesyltransferase 2</fullName>
        <ecNumber evidence="1">2.5.1.141</ecNumber>
    </recommendedName>
    <alternativeName>
        <fullName evidence="1">Heme B farnesyltransferase 2</fullName>
    </alternativeName>
    <alternativeName>
        <fullName evidence="1">Heme O synthase 2</fullName>
    </alternativeName>
</protein>
<dbReference type="EC" id="2.5.1.141" evidence="1"/>
<dbReference type="EMBL" id="CP000790">
    <property type="protein sequence ID" value="ABU74156.1"/>
    <property type="molecule type" value="Genomic_DNA"/>
</dbReference>
<dbReference type="RefSeq" id="WP_012129741.1">
    <property type="nucleotide sequence ID" value="NC_009784.1"/>
</dbReference>
<dbReference type="SMR" id="A7N6I9"/>
<dbReference type="KEGG" id="vha:VIBHAR_06264"/>
<dbReference type="PATRIC" id="fig|338187.25.peg.4077"/>
<dbReference type="UniPathway" id="UPA00834">
    <property type="reaction ID" value="UER00712"/>
</dbReference>
<dbReference type="Proteomes" id="UP000008152">
    <property type="component" value="Chromosome II"/>
</dbReference>
<dbReference type="GO" id="GO:0005886">
    <property type="term" value="C:plasma membrane"/>
    <property type="evidence" value="ECO:0007669"/>
    <property type="project" value="UniProtKB-SubCell"/>
</dbReference>
<dbReference type="GO" id="GO:0008495">
    <property type="term" value="F:protoheme IX farnesyltransferase activity"/>
    <property type="evidence" value="ECO:0007669"/>
    <property type="project" value="UniProtKB-UniRule"/>
</dbReference>
<dbReference type="GO" id="GO:0048034">
    <property type="term" value="P:heme O biosynthetic process"/>
    <property type="evidence" value="ECO:0007669"/>
    <property type="project" value="UniProtKB-UniRule"/>
</dbReference>
<dbReference type="CDD" id="cd13957">
    <property type="entry name" value="PT_UbiA_Cox10"/>
    <property type="match status" value="1"/>
</dbReference>
<dbReference type="FunFam" id="1.10.357.140:FF:000001">
    <property type="entry name" value="Protoheme IX farnesyltransferase"/>
    <property type="match status" value="1"/>
</dbReference>
<dbReference type="Gene3D" id="1.10.357.140">
    <property type="entry name" value="UbiA prenyltransferase"/>
    <property type="match status" value="1"/>
</dbReference>
<dbReference type="HAMAP" id="MF_00154">
    <property type="entry name" value="CyoE_CtaB"/>
    <property type="match status" value="1"/>
</dbReference>
<dbReference type="InterPro" id="IPR006369">
    <property type="entry name" value="Protohaem_IX_farnesylTrfase"/>
</dbReference>
<dbReference type="InterPro" id="IPR000537">
    <property type="entry name" value="UbiA_prenyltransferase"/>
</dbReference>
<dbReference type="InterPro" id="IPR030470">
    <property type="entry name" value="UbiA_prenylTrfase_CS"/>
</dbReference>
<dbReference type="InterPro" id="IPR044878">
    <property type="entry name" value="UbiA_sf"/>
</dbReference>
<dbReference type="NCBIfam" id="TIGR01473">
    <property type="entry name" value="cyoE_ctaB"/>
    <property type="match status" value="1"/>
</dbReference>
<dbReference type="NCBIfam" id="NF003349">
    <property type="entry name" value="PRK04375.1-2"/>
    <property type="match status" value="1"/>
</dbReference>
<dbReference type="PANTHER" id="PTHR43448:SF7">
    <property type="entry name" value="4-HYDROXYBENZOATE SOLANESYLTRANSFERASE"/>
    <property type="match status" value="1"/>
</dbReference>
<dbReference type="PANTHER" id="PTHR43448">
    <property type="entry name" value="PROTOHEME IX FARNESYLTRANSFERASE, MITOCHONDRIAL"/>
    <property type="match status" value="1"/>
</dbReference>
<dbReference type="Pfam" id="PF01040">
    <property type="entry name" value="UbiA"/>
    <property type="match status" value="1"/>
</dbReference>
<dbReference type="PROSITE" id="PS00943">
    <property type="entry name" value="UBIA"/>
    <property type="match status" value="1"/>
</dbReference>
<feature type="chain" id="PRO_0000326963" description="Protoheme IX farnesyltransferase 2">
    <location>
        <begin position="1"/>
        <end position="304"/>
    </location>
</feature>
<feature type="transmembrane region" description="Helical" evidence="1">
    <location>
        <begin position="28"/>
        <end position="48"/>
    </location>
</feature>
<feature type="transmembrane region" description="Helical" evidence="1">
    <location>
        <begin position="50"/>
        <end position="70"/>
    </location>
</feature>
<feature type="transmembrane region" description="Helical" evidence="1">
    <location>
        <begin position="98"/>
        <end position="118"/>
    </location>
</feature>
<feature type="transmembrane region" description="Helical" evidence="1">
    <location>
        <begin position="122"/>
        <end position="142"/>
    </location>
</feature>
<feature type="transmembrane region" description="Helical" evidence="1">
    <location>
        <begin position="150"/>
        <end position="170"/>
    </location>
</feature>
<feature type="transmembrane region" description="Helical" evidence="1">
    <location>
        <begin position="176"/>
        <end position="196"/>
    </location>
</feature>
<feature type="transmembrane region" description="Helical" evidence="1">
    <location>
        <begin position="223"/>
        <end position="243"/>
    </location>
</feature>
<feature type="transmembrane region" description="Helical" evidence="1">
    <location>
        <begin position="245"/>
        <end position="265"/>
    </location>
</feature>
<feature type="transmembrane region" description="Helical" evidence="1">
    <location>
        <begin position="282"/>
        <end position="302"/>
    </location>
</feature>
<comment type="function">
    <text evidence="1">Converts heme B (protoheme IX) to heme O by substitution of the vinyl group on carbon 2 of heme B porphyrin ring with a hydroxyethyl farnesyl side group.</text>
</comment>
<comment type="catalytic activity">
    <reaction evidence="1">
        <text>heme b + (2E,6E)-farnesyl diphosphate + H2O = Fe(II)-heme o + diphosphate</text>
        <dbReference type="Rhea" id="RHEA:28070"/>
        <dbReference type="ChEBI" id="CHEBI:15377"/>
        <dbReference type="ChEBI" id="CHEBI:33019"/>
        <dbReference type="ChEBI" id="CHEBI:60344"/>
        <dbReference type="ChEBI" id="CHEBI:60530"/>
        <dbReference type="ChEBI" id="CHEBI:175763"/>
        <dbReference type="EC" id="2.5.1.141"/>
    </reaction>
</comment>
<comment type="pathway">
    <text evidence="1">Porphyrin-containing compound metabolism; heme O biosynthesis; heme O from protoheme: step 1/1.</text>
</comment>
<comment type="subcellular location">
    <subcellularLocation>
        <location evidence="1">Cell inner membrane</location>
        <topology evidence="1">Multi-pass membrane protein</topology>
    </subcellularLocation>
</comment>
<comment type="miscellaneous">
    <text evidence="1">Carbon 2 of the heme B porphyrin ring is defined according to the Fischer nomenclature.</text>
</comment>
<comment type="similarity">
    <text evidence="1">Belongs to the UbiA prenyltransferase family. Protoheme IX farnesyltransferase subfamily.</text>
</comment>
<evidence type="ECO:0000255" key="1">
    <source>
        <dbReference type="HAMAP-Rule" id="MF_00154"/>
    </source>
</evidence>
<reference key="1">
    <citation type="submission" date="2007-08" db="EMBL/GenBank/DDBJ databases">
        <authorList>
            <consortium name="The Vibrio harveyi Genome Sequencing Project"/>
            <person name="Bassler B."/>
            <person name="Clifton S.W."/>
            <person name="Fulton L."/>
            <person name="Delehaunty K."/>
            <person name="Fronick C."/>
            <person name="Harrison M."/>
            <person name="Markivic C."/>
            <person name="Fulton R."/>
            <person name="Tin-Wollam A.-M."/>
            <person name="Shah N."/>
            <person name="Pepin K."/>
            <person name="Nash W."/>
            <person name="Thiruvilangam P."/>
            <person name="Bhonagiri V."/>
            <person name="Waters C."/>
            <person name="Tu K.C."/>
            <person name="Irgon J."/>
            <person name="Wilson R.K."/>
        </authorList>
    </citation>
    <scope>NUCLEOTIDE SEQUENCE [LARGE SCALE GENOMIC DNA]</scope>
    <source>
        <strain>ATCC BAA-1116 / BB120</strain>
    </source>
</reference>
<accession>A7N6I9</accession>
<sequence length="304" mass="33468">MSKEIALPLESGKKKIGSTYLKLTKPKVVALMLITAVVGMSLAPVVDFPWLQAAFGLVGIGLMAGSAAAFNHLIDRRIDARMARTHKRPLPSGDTNPISVAIFSTALGVIGFVLLYALVNPLTAWMTFLSLLGYAVVYTMYLKRATPQNIVIAGIAGAMPPLLGWTAVTGELHAHAWLLVMIIFIWTPPHFWAIAIHRVEDYRKVDIPMLPVTHGIEYTKTSILLYTILLTLVCILPVLVGMVGSVYLFSSLLLNAGFMYHAWKLKLSPEQNSAMETFKFSIYHLLALFVALLADHYLGLFFTP</sequence>
<organism>
    <name type="scientific">Vibrio campbellii (strain ATCC BAA-1116)</name>
    <dbReference type="NCBI Taxonomy" id="2902295"/>
    <lineage>
        <taxon>Bacteria</taxon>
        <taxon>Pseudomonadati</taxon>
        <taxon>Pseudomonadota</taxon>
        <taxon>Gammaproteobacteria</taxon>
        <taxon>Vibrionales</taxon>
        <taxon>Vibrionaceae</taxon>
        <taxon>Vibrio</taxon>
    </lineage>
</organism>
<proteinExistence type="inferred from homology"/>